<sequence length="766" mass="81531">MTSASAPPDLKAHGLSPEEYRQIQQQLGRDPNPTELAMFGVMWSEHCCYKNSRPLLKHFPTTGERVVVGPGENAGVVDLGDGDWLAFKIESHNHPSAVEPFQGAATGVGGILRDIFTLGARPIALLNSLRFGPLTDPRNRRLMARVVEGIAHYGNCVGVPTVGGEVAVDPCYSGNPLVNVMALGLLETPAVVKSAARGVGNPILYVGATTGRDGIRGASFASAELKEDAQQDRPAVQVGDPFLGKCLIEACLEAFATVAVVAAQDMGAAGITCSTAEMAAKGGVGIRFDLDRVPARESGMAAWEYLLSESQERMLLVVQKGREAEVMEIFHRWGLQASVAGEVIAEPLVEIWHQGSCVVRVPARALAEDTPVYVRPLLPEPPEYVQAAWQWDPSTLPPCDRQGIHLPQKTLAWEQVLLQLLASPTLASKAWIYRQYDHQVQNNTVLWPGQGDAAVIRIRSQKFGVGEVPPLQAARKAIAATLDGNGRWVYLDPYEGAKAAVAEAARNLSCVGADPLAITDNLNFGSPENPVVYWQLALACRGIAEACRALGTPVTGGNVSLYNEKGSQAIYPTPVIGMVGLIPDLKFICGQGWQQEGDLVYLLGSQAVTSLGGSEYLAAIYNKVTGRPAPVDLELEKRVQGACRHGIRQGWVRSAHDCSEGGLAVALAEACLSGGRGASVSLAPGSLPWDQALFGEGSSRILVSVDPAQRSPWEAYLESQLPGQWQLLGQVGGPADPLVLTTAEGDPLLSVSLAALQGAYYSAFAD</sequence>
<protein>
    <recommendedName>
        <fullName evidence="1">Phosphoribosylformylglycinamidine synthase subunit PurL</fullName>
        <shortName evidence="1">FGAM synthase</shortName>
        <ecNumber evidence="1">6.3.5.3</ecNumber>
    </recommendedName>
    <alternativeName>
        <fullName evidence="1">Formylglycinamide ribonucleotide amidotransferase subunit II</fullName>
        <shortName evidence="1">FGAR amidotransferase II</shortName>
        <shortName evidence="1">FGAR-AT II</shortName>
    </alternativeName>
    <alternativeName>
        <fullName evidence="1">Glutamine amidotransferase PurL</fullName>
    </alternativeName>
    <alternativeName>
        <fullName evidence="1">Phosphoribosylformylglycinamidine synthase subunit II</fullName>
    </alternativeName>
</protein>
<dbReference type="EC" id="6.3.5.3" evidence="1"/>
<dbReference type="EMBL" id="CP000239">
    <property type="protein sequence ID" value="ABC99532.1"/>
    <property type="molecule type" value="Genomic_DNA"/>
</dbReference>
<dbReference type="RefSeq" id="WP_011430210.1">
    <property type="nucleotide sequence ID" value="NC_007775.1"/>
</dbReference>
<dbReference type="SMR" id="Q2JQL7"/>
<dbReference type="STRING" id="321327.CYA_1361"/>
<dbReference type="KEGG" id="cya:CYA_1361"/>
<dbReference type="eggNOG" id="COG0046">
    <property type="taxonomic scope" value="Bacteria"/>
</dbReference>
<dbReference type="HOGENOM" id="CLU_003100_0_1_3"/>
<dbReference type="OrthoDB" id="9804441at2"/>
<dbReference type="UniPathway" id="UPA00074">
    <property type="reaction ID" value="UER00128"/>
</dbReference>
<dbReference type="Proteomes" id="UP000008818">
    <property type="component" value="Chromosome"/>
</dbReference>
<dbReference type="GO" id="GO:0005737">
    <property type="term" value="C:cytoplasm"/>
    <property type="evidence" value="ECO:0007669"/>
    <property type="project" value="UniProtKB-SubCell"/>
</dbReference>
<dbReference type="GO" id="GO:0005524">
    <property type="term" value="F:ATP binding"/>
    <property type="evidence" value="ECO:0007669"/>
    <property type="project" value="UniProtKB-UniRule"/>
</dbReference>
<dbReference type="GO" id="GO:0000287">
    <property type="term" value="F:magnesium ion binding"/>
    <property type="evidence" value="ECO:0007669"/>
    <property type="project" value="UniProtKB-UniRule"/>
</dbReference>
<dbReference type="GO" id="GO:0004642">
    <property type="term" value="F:phosphoribosylformylglycinamidine synthase activity"/>
    <property type="evidence" value="ECO:0007669"/>
    <property type="project" value="UniProtKB-UniRule"/>
</dbReference>
<dbReference type="GO" id="GO:0006189">
    <property type="term" value="P:'de novo' IMP biosynthetic process"/>
    <property type="evidence" value="ECO:0007669"/>
    <property type="project" value="UniProtKB-UniRule"/>
</dbReference>
<dbReference type="CDD" id="cd02203">
    <property type="entry name" value="PurL_repeat1"/>
    <property type="match status" value="1"/>
</dbReference>
<dbReference type="CDD" id="cd02204">
    <property type="entry name" value="PurL_repeat2"/>
    <property type="match status" value="1"/>
</dbReference>
<dbReference type="FunFam" id="3.30.1330.10:FF:000004">
    <property type="entry name" value="Phosphoribosylformylglycinamidine synthase subunit PurL"/>
    <property type="match status" value="1"/>
</dbReference>
<dbReference type="Gene3D" id="3.90.650.10">
    <property type="entry name" value="PurM-like C-terminal domain"/>
    <property type="match status" value="2"/>
</dbReference>
<dbReference type="Gene3D" id="3.30.1330.10">
    <property type="entry name" value="PurM-like, N-terminal domain"/>
    <property type="match status" value="2"/>
</dbReference>
<dbReference type="HAMAP" id="MF_00420">
    <property type="entry name" value="PurL_2"/>
    <property type="match status" value="1"/>
</dbReference>
<dbReference type="InterPro" id="IPR010074">
    <property type="entry name" value="PRibForGlyAmidine_synth_PurL"/>
</dbReference>
<dbReference type="InterPro" id="IPR041609">
    <property type="entry name" value="PurL_linker"/>
</dbReference>
<dbReference type="InterPro" id="IPR010918">
    <property type="entry name" value="PurM-like_C_dom"/>
</dbReference>
<dbReference type="InterPro" id="IPR036676">
    <property type="entry name" value="PurM-like_C_sf"/>
</dbReference>
<dbReference type="InterPro" id="IPR016188">
    <property type="entry name" value="PurM-like_N"/>
</dbReference>
<dbReference type="InterPro" id="IPR036921">
    <property type="entry name" value="PurM-like_N_sf"/>
</dbReference>
<dbReference type="NCBIfam" id="TIGR01736">
    <property type="entry name" value="FGAM_synth_II"/>
    <property type="match status" value="1"/>
</dbReference>
<dbReference type="NCBIfam" id="NF002290">
    <property type="entry name" value="PRK01213.1"/>
    <property type="match status" value="1"/>
</dbReference>
<dbReference type="PANTHER" id="PTHR43555">
    <property type="entry name" value="PHOSPHORIBOSYLFORMYLGLYCINAMIDINE SYNTHASE SUBUNIT PURL"/>
    <property type="match status" value="1"/>
</dbReference>
<dbReference type="PANTHER" id="PTHR43555:SF1">
    <property type="entry name" value="PHOSPHORIBOSYLFORMYLGLYCINAMIDINE SYNTHASE SUBUNIT PURL"/>
    <property type="match status" value="1"/>
</dbReference>
<dbReference type="Pfam" id="PF00586">
    <property type="entry name" value="AIRS"/>
    <property type="match status" value="2"/>
</dbReference>
<dbReference type="Pfam" id="PF02769">
    <property type="entry name" value="AIRS_C"/>
    <property type="match status" value="2"/>
</dbReference>
<dbReference type="Pfam" id="PF18072">
    <property type="entry name" value="FGAR-AT_linker"/>
    <property type="match status" value="1"/>
</dbReference>
<dbReference type="PIRSF" id="PIRSF001587">
    <property type="entry name" value="FGAM_synthase_II"/>
    <property type="match status" value="1"/>
</dbReference>
<dbReference type="SUPFAM" id="SSF56042">
    <property type="entry name" value="PurM C-terminal domain-like"/>
    <property type="match status" value="2"/>
</dbReference>
<dbReference type="SUPFAM" id="SSF55326">
    <property type="entry name" value="PurM N-terminal domain-like"/>
    <property type="match status" value="2"/>
</dbReference>
<organism>
    <name type="scientific">Synechococcus sp. (strain JA-3-3Ab)</name>
    <name type="common">Cyanobacteria bacterium Yellowstone A-Prime</name>
    <dbReference type="NCBI Taxonomy" id="321327"/>
    <lineage>
        <taxon>Bacteria</taxon>
        <taxon>Bacillati</taxon>
        <taxon>Cyanobacteriota</taxon>
        <taxon>Cyanophyceae</taxon>
        <taxon>Synechococcales</taxon>
        <taxon>Synechococcaceae</taxon>
        <taxon>Synechococcus</taxon>
    </lineage>
</organism>
<comment type="function">
    <text evidence="1">Part of the phosphoribosylformylglycinamidine synthase complex involved in the purines biosynthetic pathway. Catalyzes the ATP-dependent conversion of formylglycinamide ribonucleotide (FGAR) and glutamine to yield formylglycinamidine ribonucleotide (FGAM) and glutamate. The FGAM synthase complex is composed of three subunits. PurQ produces an ammonia molecule by converting glutamine to glutamate. PurL transfers the ammonia molecule to FGAR to form FGAM in an ATP-dependent manner. PurS interacts with PurQ and PurL and is thought to assist in the transfer of the ammonia molecule from PurQ to PurL.</text>
</comment>
<comment type="catalytic activity">
    <reaction evidence="1">
        <text>N(2)-formyl-N(1)-(5-phospho-beta-D-ribosyl)glycinamide + L-glutamine + ATP + H2O = 2-formamido-N(1)-(5-O-phospho-beta-D-ribosyl)acetamidine + L-glutamate + ADP + phosphate + H(+)</text>
        <dbReference type="Rhea" id="RHEA:17129"/>
        <dbReference type="ChEBI" id="CHEBI:15377"/>
        <dbReference type="ChEBI" id="CHEBI:15378"/>
        <dbReference type="ChEBI" id="CHEBI:29985"/>
        <dbReference type="ChEBI" id="CHEBI:30616"/>
        <dbReference type="ChEBI" id="CHEBI:43474"/>
        <dbReference type="ChEBI" id="CHEBI:58359"/>
        <dbReference type="ChEBI" id="CHEBI:147286"/>
        <dbReference type="ChEBI" id="CHEBI:147287"/>
        <dbReference type="ChEBI" id="CHEBI:456216"/>
        <dbReference type="EC" id="6.3.5.3"/>
    </reaction>
</comment>
<comment type="pathway">
    <text evidence="1">Purine metabolism; IMP biosynthesis via de novo pathway; 5-amino-1-(5-phospho-D-ribosyl)imidazole from N(2)-formyl-N(1)-(5-phospho-D-ribosyl)glycinamide: step 1/2.</text>
</comment>
<comment type="subunit">
    <text evidence="1">Monomer. Part of the FGAM synthase complex composed of 1 PurL, 1 PurQ and 2 PurS subunits.</text>
</comment>
<comment type="subcellular location">
    <subcellularLocation>
        <location evidence="1">Cytoplasm</location>
    </subcellularLocation>
</comment>
<comment type="similarity">
    <text evidence="1">Belongs to the FGAMS family.</text>
</comment>
<feature type="chain" id="PRO_0000236672" description="Phosphoribosylformylglycinamidine synthase subunit PurL">
    <location>
        <begin position="1"/>
        <end position="766"/>
    </location>
</feature>
<feature type="active site" evidence="1">
    <location>
        <position position="46"/>
    </location>
</feature>
<feature type="active site" description="Proton acceptor" evidence="1">
    <location>
        <position position="92"/>
    </location>
</feature>
<feature type="binding site" evidence="1">
    <location>
        <position position="49"/>
    </location>
    <ligand>
        <name>ATP</name>
        <dbReference type="ChEBI" id="CHEBI:30616"/>
    </ligand>
</feature>
<feature type="binding site" evidence="1">
    <location>
        <position position="88"/>
    </location>
    <ligand>
        <name>ATP</name>
        <dbReference type="ChEBI" id="CHEBI:30616"/>
    </ligand>
</feature>
<feature type="binding site" evidence="1">
    <location>
        <position position="90"/>
    </location>
    <ligand>
        <name>Mg(2+)</name>
        <dbReference type="ChEBI" id="CHEBI:18420"/>
        <label>1</label>
    </ligand>
</feature>
<feature type="binding site" evidence="1">
    <location>
        <begin position="91"/>
        <end position="94"/>
    </location>
    <ligand>
        <name>substrate</name>
    </ligand>
</feature>
<feature type="binding site" evidence="1">
    <location>
        <position position="113"/>
    </location>
    <ligand>
        <name>substrate</name>
    </ligand>
</feature>
<feature type="binding site" evidence="1">
    <location>
        <position position="114"/>
    </location>
    <ligand>
        <name>Mg(2+)</name>
        <dbReference type="ChEBI" id="CHEBI:18420"/>
        <label>2</label>
    </ligand>
</feature>
<feature type="binding site" evidence="1">
    <location>
        <position position="237"/>
    </location>
    <ligand>
        <name>substrate</name>
    </ligand>
</feature>
<feature type="binding site" evidence="1">
    <location>
        <position position="265"/>
    </location>
    <ligand>
        <name>Mg(2+)</name>
        <dbReference type="ChEBI" id="CHEBI:18420"/>
        <label>2</label>
    </ligand>
</feature>
<feature type="binding site" evidence="1">
    <location>
        <begin position="309"/>
        <end position="311"/>
    </location>
    <ligand>
        <name>substrate</name>
    </ligand>
</feature>
<feature type="binding site" evidence="1">
    <location>
        <position position="520"/>
    </location>
    <ligand>
        <name>ATP</name>
        <dbReference type="ChEBI" id="CHEBI:30616"/>
    </ligand>
</feature>
<feature type="binding site" evidence="1">
    <location>
        <position position="557"/>
    </location>
    <ligand>
        <name>ATP</name>
        <dbReference type="ChEBI" id="CHEBI:30616"/>
    </ligand>
</feature>
<feature type="binding site" evidence="1">
    <location>
        <position position="558"/>
    </location>
    <ligand>
        <name>Mg(2+)</name>
        <dbReference type="ChEBI" id="CHEBI:18420"/>
        <label>1</label>
    </ligand>
</feature>
<feature type="binding site" evidence="1">
    <location>
        <position position="560"/>
    </location>
    <ligand>
        <name>substrate</name>
    </ligand>
</feature>
<keyword id="KW-0067">ATP-binding</keyword>
<keyword id="KW-0963">Cytoplasm</keyword>
<keyword id="KW-0436">Ligase</keyword>
<keyword id="KW-0460">Magnesium</keyword>
<keyword id="KW-0479">Metal-binding</keyword>
<keyword id="KW-0547">Nucleotide-binding</keyword>
<keyword id="KW-0658">Purine biosynthesis</keyword>
<name>PURL_SYNJA</name>
<evidence type="ECO:0000255" key="1">
    <source>
        <dbReference type="HAMAP-Rule" id="MF_00420"/>
    </source>
</evidence>
<gene>
    <name evidence="1" type="primary">purL</name>
    <name type="ordered locus">CYA_1361</name>
</gene>
<reference key="1">
    <citation type="journal article" date="2007" name="ISME J.">
        <title>Population level functional diversity in a microbial community revealed by comparative genomic and metagenomic analyses.</title>
        <authorList>
            <person name="Bhaya D."/>
            <person name="Grossman A.R."/>
            <person name="Steunou A.-S."/>
            <person name="Khuri N."/>
            <person name="Cohan F.M."/>
            <person name="Hamamura N."/>
            <person name="Melendrez M.C."/>
            <person name="Bateson M.M."/>
            <person name="Ward D.M."/>
            <person name="Heidelberg J.F."/>
        </authorList>
    </citation>
    <scope>NUCLEOTIDE SEQUENCE [LARGE SCALE GENOMIC DNA]</scope>
    <source>
        <strain>JA-3-3Ab</strain>
    </source>
</reference>
<accession>Q2JQL7</accession>
<proteinExistence type="inferred from homology"/>